<name>GCST_PROM5</name>
<comment type="function">
    <text evidence="1">The glycine cleavage system catalyzes the degradation of glycine.</text>
</comment>
<comment type="catalytic activity">
    <reaction evidence="1">
        <text>N(6)-[(R)-S(8)-aminomethyldihydrolipoyl]-L-lysyl-[protein] + (6S)-5,6,7,8-tetrahydrofolate = N(6)-[(R)-dihydrolipoyl]-L-lysyl-[protein] + (6R)-5,10-methylene-5,6,7,8-tetrahydrofolate + NH4(+)</text>
        <dbReference type="Rhea" id="RHEA:16945"/>
        <dbReference type="Rhea" id="RHEA-COMP:10475"/>
        <dbReference type="Rhea" id="RHEA-COMP:10492"/>
        <dbReference type="ChEBI" id="CHEBI:15636"/>
        <dbReference type="ChEBI" id="CHEBI:28938"/>
        <dbReference type="ChEBI" id="CHEBI:57453"/>
        <dbReference type="ChEBI" id="CHEBI:83100"/>
        <dbReference type="ChEBI" id="CHEBI:83143"/>
        <dbReference type="EC" id="2.1.2.10"/>
    </reaction>
</comment>
<comment type="subunit">
    <text evidence="1">The glycine cleavage system is composed of four proteins: P, T, L and H.</text>
</comment>
<comment type="similarity">
    <text evidence="1">Belongs to the GcvT family.</text>
</comment>
<dbReference type="EC" id="2.1.2.10" evidence="1"/>
<dbReference type="EMBL" id="CP000552">
    <property type="protein sequence ID" value="ABM73085.1"/>
    <property type="molecule type" value="Genomic_DNA"/>
</dbReference>
<dbReference type="RefSeq" id="WP_011821169.1">
    <property type="nucleotide sequence ID" value="NC_008817.1"/>
</dbReference>
<dbReference type="SMR" id="A2BZ74"/>
<dbReference type="STRING" id="167542.P9515_18781"/>
<dbReference type="GeneID" id="60200745"/>
<dbReference type="KEGG" id="pmc:P9515_18781"/>
<dbReference type="eggNOG" id="COG0404">
    <property type="taxonomic scope" value="Bacteria"/>
</dbReference>
<dbReference type="HOGENOM" id="CLU_007884_10_2_3"/>
<dbReference type="OrthoDB" id="9774591at2"/>
<dbReference type="Proteomes" id="UP000001589">
    <property type="component" value="Chromosome"/>
</dbReference>
<dbReference type="GO" id="GO:0005829">
    <property type="term" value="C:cytosol"/>
    <property type="evidence" value="ECO:0007669"/>
    <property type="project" value="TreeGrafter"/>
</dbReference>
<dbReference type="GO" id="GO:0005960">
    <property type="term" value="C:glycine cleavage complex"/>
    <property type="evidence" value="ECO:0007669"/>
    <property type="project" value="InterPro"/>
</dbReference>
<dbReference type="GO" id="GO:0004047">
    <property type="term" value="F:aminomethyltransferase activity"/>
    <property type="evidence" value="ECO:0007669"/>
    <property type="project" value="UniProtKB-UniRule"/>
</dbReference>
<dbReference type="GO" id="GO:0008483">
    <property type="term" value="F:transaminase activity"/>
    <property type="evidence" value="ECO:0007669"/>
    <property type="project" value="UniProtKB-KW"/>
</dbReference>
<dbReference type="GO" id="GO:0019464">
    <property type="term" value="P:glycine decarboxylation via glycine cleavage system"/>
    <property type="evidence" value="ECO:0007669"/>
    <property type="project" value="UniProtKB-UniRule"/>
</dbReference>
<dbReference type="FunFam" id="2.40.30.110:FF:000003">
    <property type="entry name" value="Aminomethyltransferase"/>
    <property type="match status" value="1"/>
</dbReference>
<dbReference type="FunFam" id="4.10.1250.10:FF:000001">
    <property type="entry name" value="Aminomethyltransferase"/>
    <property type="match status" value="1"/>
</dbReference>
<dbReference type="Gene3D" id="2.40.30.110">
    <property type="entry name" value="Aminomethyltransferase beta-barrel domains"/>
    <property type="match status" value="1"/>
</dbReference>
<dbReference type="Gene3D" id="3.30.70.1400">
    <property type="entry name" value="Aminomethyltransferase beta-barrel domains"/>
    <property type="match status" value="1"/>
</dbReference>
<dbReference type="Gene3D" id="4.10.1250.10">
    <property type="entry name" value="Aminomethyltransferase fragment"/>
    <property type="match status" value="1"/>
</dbReference>
<dbReference type="Gene3D" id="3.30.1360.120">
    <property type="entry name" value="Probable tRNA modification gtpase trme, domain 1"/>
    <property type="match status" value="1"/>
</dbReference>
<dbReference type="HAMAP" id="MF_00259">
    <property type="entry name" value="GcvT"/>
    <property type="match status" value="1"/>
</dbReference>
<dbReference type="InterPro" id="IPR006223">
    <property type="entry name" value="GCS_T"/>
</dbReference>
<dbReference type="InterPro" id="IPR022903">
    <property type="entry name" value="GCS_T_bac"/>
</dbReference>
<dbReference type="InterPro" id="IPR013977">
    <property type="entry name" value="GCST_C"/>
</dbReference>
<dbReference type="InterPro" id="IPR006222">
    <property type="entry name" value="GCV_T_N"/>
</dbReference>
<dbReference type="InterPro" id="IPR028896">
    <property type="entry name" value="GcvT/YgfZ/DmdA"/>
</dbReference>
<dbReference type="InterPro" id="IPR029043">
    <property type="entry name" value="GcvT/YgfZ_C"/>
</dbReference>
<dbReference type="InterPro" id="IPR027266">
    <property type="entry name" value="TrmE/GcvT_dom1"/>
</dbReference>
<dbReference type="NCBIfam" id="TIGR00528">
    <property type="entry name" value="gcvT"/>
    <property type="match status" value="1"/>
</dbReference>
<dbReference type="NCBIfam" id="NF001567">
    <property type="entry name" value="PRK00389.1"/>
    <property type="match status" value="1"/>
</dbReference>
<dbReference type="PANTHER" id="PTHR43757">
    <property type="entry name" value="AMINOMETHYLTRANSFERASE"/>
    <property type="match status" value="1"/>
</dbReference>
<dbReference type="PANTHER" id="PTHR43757:SF2">
    <property type="entry name" value="AMINOMETHYLTRANSFERASE, MITOCHONDRIAL"/>
    <property type="match status" value="1"/>
</dbReference>
<dbReference type="Pfam" id="PF01571">
    <property type="entry name" value="GCV_T"/>
    <property type="match status" value="1"/>
</dbReference>
<dbReference type="Pfam" id="PF08669">
    <property type="entry name" value="GCV_T_C"/>
    <property type="match status" value="1"/>
</dbReference>
<dbReference type="PIRSF" id="PIRSF006487">
    <property type="entry name" value="GcvT"/>
    <property type="match status" value="1"/>
</dbReference>
<dbReference type="SUPFAM" id="SSF101790">
    <property type="entry name" value="Aminomethyltransferase beta-barrel domain"/>
    <property type="match status" value="1"/>
</dbReference>
<dbReference type="SUPFAM" id="SSF103025">
    <property type="entry name" value="Folate-binding domain"/>
    <property type="match status" value="1"/>
</dbReference>
<protein>
    <recommendedName>
        <fullName evidence="1">Aminomethyltransferase</fullName>
        <ecNumber evidence="1">2.1.2.10</ecNumber>
    </recommendedName>
    <alternativeName>
        <fullName evidence="1">Glycine cleavage system T protein</fullName>
    </alternativeName>
</protein>
<evidence type="ECO:0000255" key="1">
    <source>
        <dbReference type="HAMAP-Rule" id="MF_00259"/>
    </source>
</evidence>
<feature type="chain" id="PRO_1000047689" description="Aminomethyltransferase">
    <location>
        <begin position="1"/>
        <end position="370"/>
    </location>
</feature>
<accession>A2BZ74</accession>
<organism>
    <name type="scientific">Prochlorococcus marinus (strain MIT 9515)</name>
    <dbReference type="NCBI Taxonomy" id="167542"/>
    <lineage>
        <taxon>Bacteria</taxon>
        <taxon>Bacillati</taxon>
        <taxon>Cyanobacteriota</taxon>
        <taxon>Cyanophyceae</taxon>
        <taxon>Synechococcales</taxon>
        <taxon>Prochlorococcaceae</taxon>
        <taxon>Prochlorococcus</taxon>
    </lineage>
</organism>
<proteinExistence type="inferred from homology"/>
<keyword id="KW-0032">Aminotransferase</keyword>
<keyword id="KW-0808">Transferase</keyword>
<gene>
    <name evidence="1" type="primary">gcvT</name>
    <name type="ordered locus">P9515_18781</name>
</gene>
<reference key="1">
    <citation type="journal article" date="2007" name="PLoS Genet.">
        <title>Patterns and implications of gene gain and loss in the evolution of Prochlorococcus.</title>
        <authorList>
            <person name="Kettler G.C."/>
            <person name="Martiny A.C."/>
            <person name="Huang K."/>
            <person name="Zucker J."/>
            <person name="Coleman M.L."/>
            <person name="Rodrigue S."/>
            <person name="Chen F."/>
            <person name="Lapidus A."/>
            <person name="Ferriera S."/>
            <person name="Johnson J."/>
            <person name="Steglich C."/>
            <person name="Church G.M."/>
            <person name="Richardson P."/>
            <person name="Chisholm S.W."/>
        </authorList>
    </citation>
    <scope>NUCLEOTIDE SEQUENCE [LARGE SCALE GENOMIC DNA]</scope>
    <source>
        <strain>MIT 9515</strain>
    </source>
</reference>
<sequence length="370" mass="41847">MDLLKSPLYSKYIESNAKLINFAGWEMPISFSGLINEHESVRTSAGFFDISHMGVISLRGINPKEYIQKFFPTNLYSFSEGQGLYTLILNEKGGIIDDLIIYDLGRQEGDISEIFLIVNASRYQDDFLWIKNNLNTNQVSVSNAKTDKVLLSIQGRNSFTLFEEWIGSSISHIPYFGCEYKNFDHISTEGKFFFSKTGYTGENGLEILLPAQSAINLWDFLVSRNIQPCGLGARDTLRLEAGMHLYGQDLDEKTTPYEAGLGWLVNLENNHEFFGRDFLEKQSKLGIKKKLVGLTIEGRAIGRKGCEVFKDEKYIGIITSGTWSPTTEKAIAFAYIQNSYAALNNVVEVLIRGKKFKATITKRAFYKKDI</sequence>